<evidence type="ECO:0000255" key="1">
    <source>
        <dbReference type="HAMAP-Rule" id="MF_00050"/>
    </source>
</evidence>
<name>EFTS_CLONN</name>
<organism>
    <name type="scientific">Clostridium novyi (strain NT)</name>
    <dbReference type="NCBI Taxonomy" id="386415"/>
    <lineage>
        <taxon>Bacteria</taxon>
        <taxon>Bacillati</taxon>
        <taxon>Bacillota</taxon>
        <taxon>Clostridia</taxon>
        <taxon>Eubacteriales</taxon>
        <taxon>Clostridiaceae</taxon>
        <taxon>Clostridium</taxon>
    </lineage>
</organism>
<sequence length="306" mass="34243">MVTAKMVKELRERTGAGMMDCKKALTETDGDMEKAVEFLREKGLAAAAKKAGRVAAEGLVTTYLSEDNKTAVALEVNCETDFVSINESFVEFTNSIAKQIATSDVKDVEELLESKYIADENVTVKEALTALIAKIGENMNIRRFEKLTIDNGVINGYVHGEGRIGVLVELGCEKESDILMPLAKDIAMQVAAANPLFLDETSVDEEALDKEREIYRAQALNEGKPEKIVEKMVEGRVKKYLKEVCLIDQVWVKNSDYTIKKLLEEKSKEVGSPITLCKFVRFERGEGLEKKEENFAEEVQRQMNQK</sequence>
<accession>A0Q0R9</accession>
<gene>
    <name evidence="1" type="primary">tsf</name>
    <name type="ordered locus">NT01CX_2148</name>
</gene>
<protein>
    <recommendedName>
        <fullName evidence="1">Elongation factor Ts</fullName>
        <shortName evidence="1">EF-Ts</shortName>
    </recommendedName>
</protein>
<proteinExistence type="inferred from homology"/>
<keyword id="KW-0963">Cytoplasm</keyword>
<keyword id="KW-0251">Elongation factor</keyword>
<keyword id="KW-0648">Protein biosynthesis</keyword>
<keyword id="KW-1185">Reference proteome</keyword>
<dbReference type="EMBL" id="CP000382">
    <property type="protein sequence ID" value="ABK61927.1"/>
    <property type="molecule type" value="Genomic_DNA"/>
</dbReference>
<dbReference type="RefSeq" id="WP_011722221.1">
    <property type="nucleotide sequence ID" value="NC_008593.1"/>
</dbReference>
<dbReference type="SMR" id="A0Q0R9"/>
<dbReference type="STRING" id="386415.NT01CX_2148"/>
<dbReference type="KEGG" id="cno:NT01CX_2148"/>
<dbReference type="eggNOG" id="COG0264">
    <property type="taxonomic scope" value="Bacteria"/>
</dbReference>
<dbReference type="HOGENOM" id="CLU_047155_0_0_9"/>
<dbReference type="Proteomes" id="UP000008220">
    <property type="component" value="Chromosome"/>
</dbReference>
<dbReference type="GO" id="GO:0005737">
    <property type="term" value="C:cytoplasm"/>
    <property type="evidence" value="ECO:0007669"/>
    <property type="project" value="UniProtKB-SubCell"/>
</dbReference>
<dbReference type="GO" id="GO:0003746">
    <property type="term" value="F:translation elongation factor activity"/>
    <property type="evidence" value="ECO:0007669"/>
    <property type="project" value="UniProtKB-UniRule"/>
</dbReference>
<dbReference type="CDD" id="cd14275">
    <property type="entry name" value="UBA_EF-Ts"/>
    <property type="match status" value="1"/>
</dbReference>
<dbReference type="FunFam" id="1.10.286.20:FF:000001">
    <property type="entry name" value="Elongation factor Ts"/>
    <property type="match status" value="1"/>
</dbReference>
<dbReference type="FunFam" id="1.10.8.10:FF:000001">
    <property type="entry name" value="Elongation factor Ts"/>
    <property type="match status" value="1"/>
</dbReference>
<dbReference type="Gene3D" id="1.10.286.20">
    <property type="match status" value="1"/>
</dbReference>
<dbReference type="Gene3D" id="1.10.8.10">
    <property type="entry name" value="DNA helicase RuvA subunit, C-terminal domain"/>
    <property type="match status" value="1"/>
</dbReference>
<dbReference type="Gene3D" id="3.30.479.20">
    <property type="entry name" value="Elongation factor Ts, dimerisation domain"/>
    <property type="match status" value="2"/>
</dbReference>
<dbReference type="HAMAP" id="MF_00050">
    <property type="entry name" value="EF_Ts"/>
    <property type="match status" value="1"/>
</dbReference>
<dbReference type="InterPro" id="IPR036402">
    <property type="entry name" value="EF-Ts_dimer_sf"/>
</dbReference>
<dbReference type="InterPro" id="IPR001816">
    <property type="entry name" value="Transl_elong_EFTs/EF1B"/>
</dbReference>
<dbReference type="InterPro" id="IPR014039">
    <property type="entry name" value="Transl_elong_EFTs/EF1B_dimer"/>
</dbReference>
<dbReference type="InterPro" id="IPR018101">
    <property type="entry name" value="Transl_elong_Ts_CS"/>
</dbReference>
<dbReference type="InterPro" id="IPR009060">
    <property type="entry name" value="UBA-like_sf"/>
</dbReference>
<dbReference type="NCBIfam" id="TIGR00116">
    <property type="entry name" value="tsf"/>
    <property type="match status" value="1"/>
</dbReference>
<dbReference type="PANTHER" id="PTHR11741">
    <property type="entry name" value="ELONGATION FACTOR TS"/>
    <property type="match status" value="1"/>
</dbReference>
<dbReference type="PANTHER" id="PTHR11741:SF0">
    <property type="entry name" value="ELONGATION FACTOR TS, MITOCHONDRIAL"/>
    <property type="match status" value="1"/>
</dbReference>
<dbReference type="Pfam" id="PF00889">
    <property type="entry name" value="EF_TS"/>
    <property type="match status" value="1"/>
</dbReference>
<dbReference type="SUPFAM" id="SSF54713">
    <property type="entry name" value="Elongation factor Ts (EF-Ts), dimerisation domain"/>
    <property type="match status" value="2"/>
</dbReference>
<dbReference type="SUPFAM" id="SSF46934">
    <property type="entry name" value="UBA-like"/>
    <property type="match status" value="1"/>
</dbReference>
<dbReference type="PROSITE" id="PS01126">
    <property type="entry name" value="EF_TS_1"/>
    <property type="match status" value="1"/>
</dbReference>
<reference key="1">
    <citation type="journal article" date="2006" name="Nat. Biotechnol.">
        <title>The genome and transcriptomes of the anti-tumor agent Clostridium novyi-NT.</title>
        <authorList>
            <person name="Bettegowda C."/>
            <person name="Huang X."/>
            <person name="Lin J."/>
            <person name="Cheong I."/>
            <person name="Kohli M."/>
            <person name="Szabo S.A."/>
            <person name="Zhang X."/>
            <person name="Diaz L.A. Jr."/>
            <person name="Velculescu V.E."/>
            <person name="Parmigiani G."/>
            <person name="Kinzler K.W."/>
            <person name="Vogelstein B."/>
            <person name="Zhou S."/>
        </authorList>
    </citation>
    <scope>NUCLEOTIDE SEQUENCE [LARGE SCALE GENOMIC DNA]</scope>
    <source>
        <strain>NT</strain>
    </source>
</reference>
<comment type="function">
    <text evidence="1">Associates with the EF-Tu.GDP complex and induces the exchange of GDP to GTP. It remains bound to the aminoacyl-tRNA.EF-Tu.GTP complex up to the GTP hydrolysis stage on the ribosome.</text>
</comment>
<comment type="subcellular location">
    <subcellularLocation>
        <location evidence="1">Cytoplasm</location>
    </subcellularLocation>
</comment>
<comment type="similarity">
    <text evidence="1">Belongs to the EF-Ts family.</text>
</comment>
<feature type="chain" id="PRO_1000006080" description="Elongation factor Ts">
    <location>
        <begin position="1"/>
        <end position="306"/>
    </location>
</feature>
<feature type="region of interest" description="Involved in Mg(2+) ion dislocation from EF-Tu" evidence="1">
    <location>
        <begin position="80"/>
        <end position="83"/>
    </location>
</feature>